<protein>
    <recommendedName>
        <fullName>Translation initiation factor IF-2</fullName>
    </recommendedName>
</protein>
<keyword id="KW-0963">Cytoplasm</keyword>
<keyword id="KW-0342">GTP-binding</keyword>
<keyword id="KW-0396">Initiation factor</keyword>
<keyword id="KW-0547">Nucleotide-binding</keyword>
<keyword id="KW-0648">Protein biosynthesis</keyword>
<keyword id="KW-1185">Reference proteome</keyword>
<accession>O51741</accession>
<sequence length="882" mass="97796">MSKNIDDIKNEDGKKVKIIKLKKKVVKIVTYNDLSVKNDSNSFVDLHNNSNKAEYSQSRDNRTGGYSQNRDNRAGGYSQNRDNRAGGYSQNRDNRTGGYSQNRDNRTGGYSQNRDNRTGGYSQNRDNRGGYSQGRDNRTGGYSQSRDNRTGGYSQNRDNRTGGYSQNRDNRTGGYSQNRDNRTGGYSQNRDSLSFQYQGSVKKTYVAKNNSQNKYTTTSMSFRRLIKTKVPAIVSSTPAADSENSKELNRKLGEKKKQQQESQKSYKRKKAETESKTIEQKVFEQLQKKKRENLANPIPKSIDIMGSITVSDLARKMNLKSSDLIAKLMALGVMVTINEKIDSDTATILVEEYGSKVNVVSIYDETVIEEEVEDQSKRVEKPPVITIMGHVDHGKTKLLSVLQNIDINQTESGGITQHIGAYTIVYNDREITFLDTPGHEAFTMMRSRGAQVTDIVVLVVSAIDGVMPQTIEAINHAKEANVPIIVAINKIDLPDSNPDKIKHQLSEYGLVSEDWGGDTIFVMISALKNIGISELLDMILLQSDMMLLKANPSKRAIGKVLDAKIDLGRGIVCSVIIEDGTLYVGDSFVGGACYGKVKALISEKGVSVKSVGPAKAISVLGFSSMPQAGDPFQVTKTEKEAKLISSKRQDLKKYESSKNVKKVTMLNLYDSIKEGALKELKIILKADVQGSVEALKNSLEKLTNDEVRVRVVHSSAGVITETDISFASASDAIVIGFHVRPTAKAQVLADQEKVEIRKYNVIYDAINDVRSVLEGMLEPDVEQQFIGFAEVRAVINVPKIGVIAGCYVSRGLIKRDAITNVMRDGLQIHSGKISSLKRFKDDVKEVAEQYECGIMIDNYANIKEGDIIEAFEVKKVKKSFKT</sequence>
<name>IF2_BORBU</name>
<dbReference type="EMBL" id="AE000783">
    <property type="protein sequence ID" value="AAC67153.1"/>
    <property type="molecule type" value="Genomic_DNA"/>
</dbReference>
<dbReference type="PIR" id="H70199">
    <property type="entry name" value="H70199"/>
</dbReference>
<dbReference type="RefSeq" id="NP_212935.1">
    <property type="nucleotide sequence ID" value="NC_001318.1"/>
</dbReference>
<dbReference type="RefSeq" id="WP_010889822.1">
    <property type="nucleotide sequence ID" value="NC_001318.1"/>
</dbReference>
<dbReference type="SMR" id="O51741"/>
<dbReference type="STRING" id="224326.BB_0801"/>
<dbReference type="PaxDb" id="224326-BB_0801"/>
<dbReference type="EnsemblBacteria" id="AAC67153">
    <property type="protein sequence ID" value="AAC67153"/>
    <property type="gene ID" value="BB_0801"/>
</dbReference>
<dbReference type="KEGG" id="bbu:BB_0801"/>
<dbReference type="PATRIC" id="fig|224326.49.peg.1193"/>
<dbReference type="HOGENOM" id="CLU_006301_1_1_12"/>
<dbReference type="OrthoDB" id="9811804at2"/>
<dbReference type="Proteomes" id="UP000001807">
    <property type="component" value="Chromosome"/>
</dbReference>
<dbReference type="GO" id="GO:0005829">
    <property type="term" value="C:cytosol"/>
    <property type="evidence" value="ECO:0007669"/>
    <property type="project" value="TreeGrafter"/>
</dbReference>
<dbReference type="GO" id="GO:0005525">
    <property type="term" value="F:GTP binding"/>
    <property type="evidence" value="ECO:0007669"/>
    <property type="project" value="UniProtKB-KW"/>
</dbReference>
<dbReference type="GO" id="GO:0003924">
    <property type="term" value="F:GTPase activity"/>
    <property type="evidence" value="ECO:0007669"/>
    <property type="project" value="UniProtKB-UniRule"/>
</dbReference>
<dbReference type="GO" id="GO:0003743">
    <property type="term" value="F:translation initiation factor activity"/>
    <property type="evidence" value="ECO:0007669"/>
    <property type="project" value="UniProtKB-UniRule"/>
</dbReference>
<dbReference type="CDD" id="cd01887">
    <property type="entry name" value="IF2_eIF5B"/>
    <property type="match status" value="1"/>
</dbReference>
<dbReference type="CDD" id="cd03702">
    <property type="entry name" value="IF2_mtIF2_II"/>
    <property type="match status" value="1"/>
</dbReference>
<dbReference type="CDD" id="cd03692">
    <property type="entry name" value="mtIF2_IVc"/>
    <property type="match status" value="1"/>
</dbReference>
<dbReference type="FunFam" id="2.40.30.10:FF:000008">
    <property type="entry name" value="Translation initiation factor IF-2"/>
    <property type="match status" value="1"/>
</dbReference>
<dbReference type="FunFam" id="3.40.50.10050:FF:000001">
    <property type="entry name" value="Translation initiation factor IF-2"/>
    <property type="match status" value="1"/>
</dbReference>
<dbReference type="FunFam" id="3.40.50.300:FF:000019">
    <property type="entry name" value="Translation initiation factor IF-2"/>
    <property type="match status" value="1"/>
</dbReference>
<dbReference type="Gene3D" id="3.40.50.300">
    <property type="entry name" value="P-loop containing nucleotide triphosphate hydrolases"/>
    <property type="match status" value="1"/>
</dbReference>
<dbReference type="Gene3D" id="2.40.30.10">
    <property type="entry name" value="Translation factors"/>
    <property type="match status" value="2"/>
</dbReference>
<dbReference type="Gene3D" id="3.40.50.10050">
    <property type="entry name" value="Translation initiation factor IF- 2, domain 3"/>
    <property type="match status" value="1"/>
</dbReference>
<dbReference type="HAMAP" id="MF_00100_B">
    <property type="entry name" value="IF_2_B"/>
    <property type="match status" value="1"/>
</dbReference>
<dbReference type="InterPro" id="IPR053905">
    <property type="entry name" value="EF-G-like_DII"/>
</dbReference>
<dbReference type="InterPro" id="IPR044145">
    <property type="entry name" value="IF2_II"/>
</dbReference>
<dbReference type="InterPro" id="IPR006847">
    <property type="entry name" value="IF2_N"/>
</dbReference>
<dbReference type="InterPro" id="IPR027417">
    <property type="entry name" value="P-loop_NTPase"/>
</dbReference>
<dbReference type="InterPro" id="IPR005225">
    <property type="entry name" value="Small_GTP-bd"/>
</dbReference>
<dbReference type="InterPro" id="IPR000795">
    <property type="entry name" value="T_Tr_GTP-bd_dom"/>
</dbReference>
<dbReference type="InterPro" id="IPR000178">
    <property type="entry name" value="TF_IF2_bacterial-like"/>
</dbReference>
<dbReference type="InterPro" id="IPR015760">
    <property type="entry name" value="TIF_IF2"/>
</dbReference>
<dbReference type="InterPro" id="IPR023115">
    <property type="entry name" value="TIF_IF2_dom3"/>
</dbReference>
<dbReference type="InterPro" id="IPR036925">
    <property type="entry name" value="TIF_IF2_dom3_sf"/>
</dbReference>
<dbReference type="InterPro" id="IPR009000">
    <property type="entry name" value="Transl_B-barrel_sf"/>
</dbReference>
<dbReference type="NCBIfam" id="TIGR00487">
    <property type="entry name" value="IF-2"/>
    <property type="match status" value="1"/>
</dbReference>
<dbReference type="NCBIfam" id="TIGR00231">
    <property type="entry name" value="small_GTP"/>
    <property type="match status" value="1"/>
</dbReference>
<dbReference type="PANTHER" id="PTHR43381:SF5">
    <property type="entry name" value="TR-TYPE G DOMAIN-CONTAINING PROTEIN"/>
    <property type="match status" value="1"/>
</dbReference>
<dbReference type="PANTHER" id="PTHR43381">
    <property type="entry name" value="TRANSLATION INITIATION FACTOR IF-2-RELATED"/>
    <property type="match status" value="1"/>
</dbReference>
<dbReference type="Pfam" id="PF22042">
    <property type="entry name" value="EF-G_D2"/>
    <property type="match status" value="1"/>
</dbReference>
<dbReference type="Pfam" id="PF00009">
    <property type="entry name" value="GTP_EFTU"/>
    <property type="match status" value="1"/>
</dbReference>
<dbReference type="Pfam" id="PF11987">
    <property type="entry name" value="IF-2"/>
    <property type="match status" value="1"/>
</dbReference>
<dbReference type="Pfam" id="PF04760">
    <property type="entry name" value="IF2_N"/>
    <property type="match status" value="1"/>
</dbReference>
<dbReference type="SUPFAM" id="SSF52156">
    <property type="entry name" value="Initiation factor IF2/eIF5b, domain 3"/>
    <property type="match status" value="1"/>
</dbReference>
<dbReference type="SUPFAM" id="SSF52540">
    <property type="entry name" value="P-loop containing nucleoside triphosphate hydrolases"/>
    <property type="match status" value="1"/>
</dbReference>
<dbReference type="SUPFAM" id="SSF50447">
    <property type="entry name" value="Translation proteins"/>
    <property type="match status" value="2"/>
</dbReference>
<dbReference type="PROSITE" id="PS51722">
    <property type="entry name" value="G_TR_2"/>
    <property type="match status" value="1"/>
</dbReference>
<evidence type="ECO:0000250" key="1"/>
<evidence type="ECO:0000256" key="2">
    <source>
        <dbReference type="SAM" id="MobiDB-lite"/>
    </source>
</evidence>
<evidence type="ECO:0000305" key="3"/>
<proteinExistence type="inferred from homology"/>
<gene>
    <name type="primary">infB</name>
    <name type="ordered locus">BB_0801</name>
</gene>
<reference key="1">
    <citation type="journal article" date="1997" name="Nature">
        <title>Genomic sequence of a Lyme disease spirochaete, Borrelia burgdorferi.</title>
        <authorList>
            <person name="Fraser C.M."/>
            <person name="Casjens S."/>
            <person name="Huang W.M."/>
            <person name="Sutton G.G."/>
            <person name="Clayton R.A."/>
            <person name="Lathigra R."/>
            <person name="White O."/>
            <person name="Ketchum K.A."/>
            <person name="Dodson R.J."/>
            <person name="Hickey E.K."/>
            <person name="Gwinn M.L."/>
            <person name="Dougherty B.A."/>
            <person name="Tomb J.-F."/>
            <person name="Fleischmann R.D."/>
            <person name="Richardson D.L."/>
            <person name="Peterson J.D."/>
            <person name="Kerlavage A.R."/>
            <person name="Quackenbush J."/>
            <person name="Salzberg S.L."/>
            <person name="Hanson M."/>
            <person name="van Vugt R."/>
            <person name="Palmer N."/>
            <person name="Adams M.D."/>
            <person name="Gocayne J.D."/>
            <person name="Weidman J.F."/>
            <person name="Utterback T.R."/>
            <person name="Watthey L."/>
            <person name="McDonald L.A."/>
            <person name="Artiach P."/>
            <person name="Bowman C."/>
            <person name="Garland S.A."/>
            <person name="Fujii C."/>
            <person name="Cotton M.D."/>
            <person name="Horst K."/>
            <person name="Roberts K.M."/>
            <person name="Hatch B."/>
            <person name="Smith H.O."/>
            <person name="Venter J.C."/>
        </authorList>
    </citation>
    <scope>NUCLEOTIDE SEQUENCE [LARGE SCALE GENOMIC DNA]</scope>
    <source>
        <strain>ATCC 35210 / DSM 4680 / CIP 102532 / B31</strain>
    </source>
</reference>
<feature type="chain" id="PRO_0000137174" description="Translation initiation factor IF-2">
    <location>
        <begin position="1"/>
        <end position="882"/>
    </location>
</feature>
<feature type="domain" description="tr-type G">
    <location>
        <begin position="380"/>
        <end position="553"/>
    </location>
</feature>
<feature type="region of interest" description="Disordered" evidence="2">
    <location>
        <begin position="38"/>
        <end position="192"/>
    </location>
</feature>
<feature type="region of interest" description="Disordered" evidence="2">
    <location>
        <begin position="236"/>
        <end position="274"/>
    </location>
</feature>
<feature type="region of interest" description="G1" evidence="1">
    <location>
        <begin position="389"/>
        <end position="396"/>
    </location>
</feature>
<feature type="region of interest" description="G2" evidence="1">
    <location>
        <begin position="414"/>
        <end position="418"/>
    </location>
</feature>
<feature type="region of interest" description="G3" evidence="1">
    <location>
        <begin position="435"/>
        <end position="438"/>
    </location>
</feature>
<feature type="region of interest" description="G4" evidence="1">
    <location>
        <begin position="489"/>
        <end position="492"/>
    </location>
</feature>
<feature type="region of interest" description="G5" evidence="1">
    <location>
        <begin position="525"/>
        <end position="527"/>
    </location>
</feature>
<feature type="compositionally biased region" description="Polar residues" evidence="2">
    <location>
        <begin position="38"/>
        <end position="56"/>
    </location>
</feature>
<feature type="compositionally biased region" description="Polar residues" evidence="2">
    <location>
        <begin position="97"/>
        <end position="124"/>
    </location>
</feature>
<feature type="compositionally biased region" description="Polar residues" evidence="2">
    <location>
        <begin position="140"/>
        <end position="192"/>
    </location>
</feature>
<feature type="compositionally biased region" description="Basic and acidic residues" evidence="2">
    <location>
        <begin position="243"/>
        <end position="259"/>
    </location>
</feature>
<feature type="binding site" evidence="1">
    <location>
        <begin position="389"/>
        <end position="396"/>
    </location>
    <ligand>
        <name>GTP</name>
        <dbReference type="ChEBI" id="CHEBI:37565"/>
    </ligand>
</feature>
<feature type="binding site" evidence="1">
    <location>
        <begin position="435"/>
        <end position="439"/>
    </location>
    <ligand>
        <name>GTP</name>
        <dbReference type="ChEBI" id="CHEBI:37565"/>
    </ligand>
</feature>
<feature type="binding site" evidence="1">
    <location>
        <begin position="489"/>
        <end position="492"/>
    </location>
    <ligand>
        <name>GTP</name>
        <dbReference type="ChEBI" id="CHEBI:37565"/>
    </ligand>
</feature>
<organism>
    <name type="scientific">Borreliella burgdorferi (strain ATCC 35210 / DSM 4680 / CIP 102532 / B31)</name>
    <name type="common">Borrelia burgdorferi</name>
    <dbReference type="NCBI Taxonomy" id="224326"/>
    <lineage>
        <taxon>Bacteria</taxon>
        <taxon>Pseudomonadati</taxon>
        <taxon>Spirochaetota</taxon>
        <taxon>Spirochaetia</taxon>
        <taxon>Spirochaetales</taxon>
        <taxon>Borreliaceae</taxon>
        <taxon>Borreliella</taxon>
    </lineage>
</organism>
<comment type="function">
    <text evidence="1">One of the essential components for the initiation of protein synthesis. Protects formylmethionyl-tRNA from spontaneous hydrolysis and promotes its binding to the 30S ribosomal subunits. Also involved in the hydrolysis of GTP during the formation of the 70S ribosomal complex (By similarity).</text>
</comment>
<comment type="subcellular location">
    <subcellularLocation>
        <location evidence="1">Cytoplasm</location>
    </subcellularLocation>
</comment>
<comment type="similarity">
    <text evidence="3">Belongs to the TRAFAC class translation factor GTPase superfamily. Classic translation factor GTPase family. IF-2 subfamily.</text>
</comment>